<feature type="chain" id="PRO_0000417895" description="L-carnitine dehydrogenase/betainyl-CoA thioesterase">
    <location>
        <begin position="1"/>
        <end position="484"/>
    </location>
</feature>
<feature type="region of interest" description="L-carnitine dehydrogenase" evidence="2">
    <location>
        <begin position="1"/>
        <end position="322"/>
    </location>
</feature>
<feature type="region of interest" description="Betainyl-CoA thioesterase" evidence="2">
    <location>
        <begin position="323"/>
        <end position="484"/>
    </location>
</feature>
<feature type="binding site" evidence="3">
    <location>
        <begin position="7"/>
        <end position="12"/>
    </location>
    <ligand>
        <name>NAD(+)</name>
        <dbReference type="ChEBI" id="CHEBI:57540"/>
    </ligand>
</feature>
<evidence type="ECO:0000250" key="1">
    <source>
        <dbReference type="UniProtKB" id="D7UNT2"/>
    </source>
</evidence>
<evidence type="ECO:0000250" key="2">
    <source>
        <dbReference type="UniProtKB" id="Q92NF5"/>
    </source>
</evidence>
<evidence type="ECO:0000255" key="3"/>
<evidence type="ECO:0000305" key="4"/>
<evidence type="ECO:0000312" key="5">
    <source>
        <dbReference type="EMBL" id="AAK90717.2"/>
    </source>
</evidence>
<keyword id="KW-0963">Cytoplasm</keyword>
<keyword id="KW-0378">Hydrolase</keyword>
<keyword id="KW-0511">Multifunctional enzyme</keyword>
<keyword id="KW-0520">NAD</keyword>
<keyword id="KW-0560">Oxidoreductase</keyword>
<keyword id="KW-0614">Plasmid</keyword>
<keyword id="KW-1185">Reference proteome</keyword>
<protein>
    <recommendedName>
        <fullName evidence="2">L-carnitine dehydrogenase/betainyl-CoA thioesterase</fullName>
    </recommendedName>
    <alternativeName>
        <fullName evidence="2">CDH thioesterase</fullName>
    </alternativeName>
    <domain>
        <recommendedName>
            <fullName evidence="2">L-carnitine dehydrogenase</fullName>
            <shortName evidence="2">CDH</shortName>
            <shortName evidence="2">L-CDH</shortName>
            <ecNumber evidence="2">1.1.1.108</ecNumber>
        </recommendedName>
    </domain>
    <domain>
        <recommendedName>
            <fullName evidence="2">Betainyl-CoA thioesterase</fullName>
            <ecNumber evidence="2">3.1.2.33</ecNumber>
        </recommendedName>
        <alternativeName>
            <fullName evidence="2">Betainyl-CoA thiolase</fullName>
        </alternativeName>
    </domain>
</protein>
<dbReference type="EC" id="1.1.1.108" evidence="2"/>
<dbReference type="EC" id="3.1.2.33" evidence="2"/>
<dbReference type="EMBL" id="AE007872">
    <property type="protein sequence ID" value="AAK90717.2"/>
    <property type="molecule type" value="Genomic_DNA"/>
</dbReference>
<dbReference type="RefSeq" id="NP_396276.2">
    <property type="nucleotide sequence ID" value="NC_003064.2"/>
</dbReference>
<dbReference type="RefSeq" id="WP_010974598.1">
    <property type="nucleotide sequence ID" value="NC_003064.2"/>
</dbReference>
<dbReference type="SMR" id="Q7D3B2"/>
<dbReference type="EnsemblBacteria" id="AAK90717">
    <property type="protein sequence ID" value="AAK90717"/>
    <property type="gene ID" value="Atu5344"/>
</dbReference>
<dbReference type="GeneID" id="1137117"/>
<dbReference type="KEGG" id="atu:Atu5344"/>
<dbReference type="PATRIC" id="fig|176299.10.peg.5016"/>
<dbReference type="eggNOG" id="COG0824">
    <property type="taxonomic scope" value="Bacteria"/>
</dbReference>
<dbReference type="eggNOG" id="COG1250">
    <property type="taxonomic scope" value="Bacteria"/>
</dbReference>
<dbReference type="HOGENOM" id="CLU_578448_0_0_5"/>
<dbReference type="OrthoDB" id="9803287at2"/>
<dbReference type="PhylomeDB" id="Q7D3B2"/>
<dbReference type="BioCyc" id="AGRO:ATU5344-MONOMER"/>
<dbReference type="UniPathway" id="UPA00117"/>
<dbReference type="Proteomes" id="UP000000813">
    <property type="component" value="Plasmid At"/>
</dbReference>
<dbReference type="GO" id="GO:0005737">
    <property type="term" value="C:cytoplasm"/>
    <property type="evidence" value="ECO:0007669"/>
    <property type="project" value="UniProtKB-SubCell"/>
</dbReference>
<dbReference type="GO" id="GO:0047728">
    <property type="term" value="F:carnitine 3-dehydrogenase activity"/>
    <property type="evidence" value="ECO:0007669"/>
    <property type="project" value="UniProtKB-UniRule"/>
</dbReference>
<dbReference type="GO" id="GO:0016787">
    <property type="term" value="F:hydrolase activity"/>
    <property type="evidence" value="ECO:0007669"/>
    <property type="project" value="UniProtKB-KW"/>
</dbReference>
<dbReference type="GO" id="GO:0070403">
    <property type="term" value="F:NAD+ binding"/>
    <property type="evidence" value="ECO:0007669"/>
    <property type="project" value="InterPro"/>
</dbReference>
<dbReference type="GO" id="GO:0009437">
    <property type="term" value="P:carnitine metabolic process"/>
    <property type="evidence" value="ECO:0007669"/>
    <property type="project" value="UniProtKB-UniRule"/>
</dbReference>
<dbReference type="GO" id="GO:0009056">
    <property type="term" value="P:catabolic process"/>
    <property type="evidence" value="ECO:0007669"/>
    <property type="project" value="UniProtKB-ARBA"/>
</dbReference>
<dbReference type="GO" id="GO:0006631">
    <property type="term" value="P:fatty acid metabolic process"/>
    <property type="evidence" value="ECO:0007669"/>
    <property type="project" value="InterPro"/>
</dbReference>
<dbReference type="CDD" id="cd00586">
    <property type="entry name" value="4HBT"/>
    <property type="match status" value="1"/>
</dbReference>
<dbReference type="Gene3D" id="3.10.129.10">
    <property type="entry name" value="Hotdog Thioesterase"/>
    <property type="match status" value="1"/>
</dbReference>
<dbReference type="Gene3D" id="1.10.1040.10">
    <property type="entry name" value="N-(1-d-carboxylethyl)-l-norvaline Dehydrogenase, domain 2"/>
    <property type="match status" value="1"/>
</dbReference>
<dbReference type="Gene3D" id="3.40.50.720">
    <property type="entry name" value="NAD(P)-binding Rossmann-like Domain"/>
    <property type="match status" value="1"/>
</dbReference>
<dbReference type="HAMAP" id="MF_02129">
    <property type="entry name" value="L_carnitine_dehydrog"/>
    <property type="match status" value="1"/>
</dbReference>
<dbReference type="InterPro" id="IPR006176">
    <property type="entry name" value="3-OHacyl-CoA_DH_NAD-bd"/>
</dbReference>
<dbReference type="InterPro" id="IPR006108">
    <property type="entry name" value="3HC_DH_C"/>
</dbReference>
<dbReference type="InterPro" id="IPR008927">
    <property type="entry name" value="6-PGluconate_DH-like_C_sf"/>
</dbReference>
<dbReference type="InterPro" id="IPR013328">
    <property type="entry name" value="6PGD_dom2"/>
</dbReference>
<dbReference type="InterPro" id="IPR029069">
    <property type="entry name" value="HotDog_dom_sf"/>
</dbReference>
<dbReference type="InterPro" id="IPR026578">
    <property type="entry name" value="L-carnitine_dehydrogenase"/>
</dbReference>
<dbReference type="InterPro" id="IPR036291">
    <property type="entry name" value="NAD(P)-bd_dom_sf"/>
</dbReference>
<dbReference type="NCBIfam" id="NF005716">
    <property type="entry name" value="PRK07531.1"/>
    <property type="match status" value="1"/>
</dbReference>
<dbReference type="PANTHER" id="PTHR48075">
    <property type="entry name" value="3-HYDROXYACYL-COA DEHYDROGENASE FAMILY PROTEIN"/>
    <property type="match status" value="1"/>
</dbReference>
<dbReference type="PANTHER" id="PTHR48075:SF5">
    <property type="entry name" value="3-HYDROXYBUTYRYL-COA DEHYDROGENASE"/>
    <property type="match status" value="1"/>
</dbReference>
<dbReference type="Pfam" id="PF00725">
    <property type="entry name" value="3HCDH"/>
    <property type="match status" value="1"/>
</dbReference>
<dbReference type="Pfam" id="PF02737">
    <property type="entry name" value="3HCDH_N"/>
    <property type="match status" value="1"/>
</dbReference>
<dbReference type="Pfam" id="PF13279">
    <property type="entry name" value="4HBT_2"/>
    <property type="match status" value="1"/>
</dbReference>
<dbReference type="SUPFAM" id="SSF48179">
    <property type="entry name" value="6-phosphogluconate dehydrogenase C-terminal domain-like"/>
    <property type="match status" value="1"/>
</dbReference>
<dbReference type="SUPFAM" id="SSF51735">
    <property type="entry name" value="NAD(P)-binding Rossmann-fold domains"/>
    <property type="match status" value="1"/>
</dbReference>
<dbReference type="SUPFAM" id="SSF54637">
    <property type="entry name" value="Thioesterase/thiol ester dehydrase-isomerase"/>
    <property type="match status" value="1"/>
</dbReference>
<gene>
    <name evidence="5" type="ordered locus">Atu5344</name>
</gene>
<accession>Q7D3B2</accession>
<proteinExistence type="inferred from homology"/>
<organism>
    <name type="scientific">Agrobacterium fabrum (strain C58 / ATCC 33970)</name>
    <name type="common">Agrobacterium tumefaciens (strain C58)</name>
    <dbReference type="NCBI Taxonomy" id="176299"/>
    <lineage>
        <taxon>Bacteria</taxon>
        <taxon>Pseudomonadati</taxon>
        <taxon>Pseudomonadota</taxon>
        <taxon>Alphaproteobacteria</taxon>
        <taxon>Hyphomicrobiales</taxon>
        <taxon>Rhizobiaceae</taxon>
        <taxon>Rhizobium/Agrobacterium group</taxon>
        <taxon>Agrobacterium</taxon>
        <taxon>Agrobacterium tumefaciens complex</taxon>
    </lineage>
</organism>
<geneLocation type="plasmid">
    <name>AT</name>
</geneLocation>
<sequence>MKIAAIGGGVIGGGWIARFILAGHDVTVFDPHPEANRIVTEVMANAAEAWGRLYQSPLPKPGSINWASSIAEAVAGADYIQESVPERLDLKHRIIAEIEATASPQAIIASSTSGFKPSELREGSVHSERVIVAHPFNPVYLLPVVEVVGGGVAAQRASDILVSVGMKPVQIGREIDAHIGDRLLEAIWREALWLVKDGIATTQEIDDIIRYGFGLRWAQMGLFETYRIAGGEAGMRHFLAQFGPALKWPWTKLMDVPEFNDELIDLIAGQSDAQSGAYSIRELERIRDSNLIGIFHALKANDWGAGQTVKAMENRFYARNGKVQADYPLRLHEAHVNGGWVDYNGHMTEFRYLQVLGDATDALLIHIGLDADYRAAGHSAYTVETHIRHLAEVKAGARLTVETRLLGYDDKRLRLHHAILNEDGETVATGEHMLLHVDTKANRTVAMPPALMRALDHLNAQEEGPLPDHAGSGIRAVRLKETSA</sequence>
<name>LCDHT_AGRFC</name>
<reference key="1">
    <citation type="journal article" date="2001" name="Science">
        <title>Genome sequence of the plant pathogen and biotechnology agent Agrobacterium tumefaciens C58.</title>
        <authorList>
            <person name="Goodner B."/>
            <person name="Hinkle G."/>
            <person name="Gattung S."/>
            <person name="Miller N."/>
            <person name="Blanchard M."/>
            <person name="Qurollo B."/>
            <person name="Goldman B.S."/>
            <person name="Cao Y."/>
            <person name="Askenazi M."/>
            <person name="Halling C."/>
            <person name="Mullin L."/>
            <person name="Houmiel K."/>
            <person name="Gordon J."/>
            <person name="Vaudin M."/>
            <person name="Iartchouk O."/>
            <person name="Epp A."/>
            <person name="Liu F."/>
            <person name="Wollam C."/>
            <person name="Allinger M."/>
            <person name="Doughty D."/>
            <person name="Scott C."/>
            <person name="Lappas C."/>
            <person name="Markelz B."/>
            <person name="Flanagan C."/>
            <person name="Crowell C."/>
            <person name="Gurson J."/>
            <person name="Lomo C."/>
            <person name="Sear C."/>
            <person name="Strub G."/>
            <person name="Cielo C."/>
            <person name="Slater S."/>
        </authorList>
    </citation>
    <scope>NUCLEOTIDE SEQUENCE [LARGE SCALE GENOMIC DNA]</scope>
    <source>
        <strain>C58 / ATCC 33970</strain>
    </source>
</reference>
<comment type="function">
    <text evidence="2">Multifunctional enzyme that catalyzes the NAD(+)-dependent oxidation of L-carnitine to 3-dehydrocarnitine and the cleavage of betainyl-CoA (N,N,N-trimethylglycyl-CoA) into glycine betaine and coenzyme A.</text>
</comment>
<comment type="catalytic activity">
    <reaction evidence="2">
        <text>carnitine + NAD(+) = 3-dehydrocarnitine + NADH + H(+)</text>
        <dbReference type="Rhea" id="RHEA:19265"/>
        <dbReference type="ChEBI" id="CHEBI:15378"/>
        <dbReference type="ChEBI" id="CHEBI:17126"/>
        <dbReference type="ChEBI" id="CHEBI:57540"/>
        <dbReference type="ChEBI" id="CHEBI:57885"/>
        <dbReference type="ChEBI" id="CHEBI:57945"/>
        <dbReference type="EC" id="1.1.1.108"/>
    </reaction>
</comment>
<comment type="catalytic activity">
    <reaction evidence="2">
        <text>N,N,N-trimethylglycyl-CoA + H2O = glycine betaine + CoA + H(+)</text>
        <dbReference type="Rhea" id="RHEA:45716"/>
        <dbReference type="ChEBI" id="CHEBI:15377"/>
        <dbReference type="ChEBI" id="CHEBI:15378"/>
        <dbReference type="ChEBI" id="CHEBI:17750"/>
        <dbReference type="ChEBI" id="CHEBI:57287"/>
        <dbReference type="ChEBI" id="CHEBI:85405"/>
        <dbReference type="EC" id="3.1.2.33"/>
    </reaction>
</comment>
<comment type="pathway">
    <text evidence="2">Amine and polyamine metabolism; carnitine metabolism.</text>
</comment>
<comment type="subunit">
    <text evidence="2">Homodimer.</text>
</comment>
<comment type="subcellular location">
    <subcellularLocation>
        <location evidence="1">Cytoplasm</location>
    </subcellularLocation>
</comment>
<comment type="similarity">
    <text evidence="4">In the N-terminal section; belongs to the 3-hydroxyacyl-CoA dehydrogenase family. L-carnitine dehydrogenase subfamily.</text>
</comment>
<comment type="similarity">
    <text evidence="4">In the C-terminal section; belongs to the betainyl-CoA thioesterase family.</text>
</comment>